<keyword id="KW-0997">Cell inner membrane</keyword>
<keyword id="KW-1003">Cell membrane</keyword>
<keyword id="KW-0472">Membrane</keyword>
<keyword id="KW-0520">NAD</keyword>
<keyword id="KW-0874">Quinone</keyword>
<keyword id="KW-1278">Translocase</keyword>
<keyword id="KW-0813">Transport</keyword>
<keyword id="KW-0830">Ubiquinone</keyword>
<protein>
    <recommendedName>
        <fullName evidence="1">NADH-quinone oxidoreductase subunit C</fullName>
        <ecNumber evidence="1">7.1.1.-</ecNumber>
    </recommendedName>
    <alternativeName>
        <fullName evidence="1">NADH dehydrogenase I subunit C</fullName>
    </alternativeName>
    <alternativeName>
        <fullName evidence="1">NDH-1 subunit C</fullName>
    </alternativeName>
</protein>
<organism>
    <name type="scientific">Coxiella burnetii (strain Dugway 5J108-111)</name>
    <dbReference type="NCBI Taxonomy" id="434922"/>
    <lineage>
        <taxon>Bacteria</taxon>
        <taxon>Pseudomonadati</taxon>
        <taxon>Pseudomonadota</taxon>
        <taxon>Gammaproteobacteria</taxon>
        <taxon>Legionellales</taxon>
        <taxon>Coxiellaceae</taxon>
        <taxon>Coxiella</taxon>
    </lineage>
</organism>
<sequence length="227" mass="26308">MAEKQTLIDAINDRFNSQIEAVVAGVDMVTIELLPTHLLEVCTALRDDPPFNFELLLDVCGVDYLEYGMSPWRTEETPNTGFSRGFEEVIQEQIIPWNKPRFAVVYHLLSLRHNHRIRLKTYVEGDPPLVPSVIKIWSSADWYEREAFDLYGIVFEGHPDLRRLLTDYGFVGHPFRKDFPLIGEVELRYDAAQQRCVYEPVSIQPRVLVPKVIRVDSRYEKGEKENG</sequence>
<dbReference type="EC" id="7.1.1.-" evidence="1"/>
<dbReference type="EMBL" id="CP000733">
    <property type="protein sequence ID" value="ABS76688.1"/>
    <property type="molecule type" value="Genomic_DNA"/>
</dbReference>
<dbReference type="RefSeq" id="WP_010958234.1">
    <property type="nucleotide sequence ID" value="NC_009727.1"/>
</dbReference>
<dbReference type="SMR" id="A9KBK6"/>
<dbReference type="KEGG" id="cbd:CBUD_0547"/>
<dbReference type="HOGENOM" id="CLU_042628_2_1_6"/>
<dbReference type="Proteomes" id="UP000008555">
    <property type="component" value="Chromosome"/>
</dbReference>
<dbReference type="GO" id="GO:0005886">
    <property type="term" value="C:plasma membrane"/>
    <property type="evidence" value="ECO:0007669"/>
    <property type="project" value="UniProtKB-SubCell"/>
</dbReference>
<dbReference type="GO" id="GO:0008137">
    <property type="term" value="F:NADH dehydrogenase (ubiquinone) activity"/>
    <property type="evidence" value="ECO:0007669"/>
    <property type="project" value="InterPro"/>
</dbReference>
<dbReference type="GO" id="GO:0050136">
    <property type="term" value="F:NADH:ubiquinone reductase (non-electrogenic) activity"/>
    <property type="evidence" value="ECO:0007669"/>
    <property type="project" value="UniProtKB-UniRule"/>
</dbReference>
<dbReference type="GO" id="GO:0048038">
    <property type="term" value="F:quinone binding"/>
    <property type="evidence" value="ECO:0007669"/>
    <property type="project" value="UniProtKB-KW"/>
</dbReference>
<dbReference type="FunFam" id="3.30.460.80:FF:000006">
    <property type="entry name" value="NADH-quinone oxidoreductase subunit C"/>
    <property type="match status" value="1"/>
</dbReference>
<dbReference type="Gene3D" id="3.30.460.80">
    <property type="entry name" value="NADH:ubiquinone oxidoreductase, 30kDa subunit"/>
    <property type="match status" value="1"/>
</dbReference>
<dbReference type="HAMAP" id="MF_01357">
    <property type="entry name" value="NDH1_NuoC"/>
    <property type="match status" value="1"/>
</dbReference>
<dbReference type="InterPro" id="IPR010218">
    <property type="entry name" value="NADH_DH_suC"/>
</dbReference>
<dbReference type="InterPro" id="IPR037232">
    <property type="entry name" value="NADH_quin_OxRdtase_su_C/D-like"/>
</dbReference>
<dbReference type="InterPro" id="IPR001268">
    <property type="entry name" value="NADH_UbQ_OxRdtase_30kDa_su"/>
</dbReference>
<dbReference type="InterPro" id="IPR020396">
    <property type="entry name" value="NADH_UbQ_OxRdtase_CS"/>
</dbReference>
<dbReference type="NCBIfam" id="TIGR01961">
    <property type="entry name" value="NuoC_fam"/>
    <property type="match status" value="1"/>
</dbReference>
<dbReference type="NCBIfam" id="NF004730">
    <property type="entry name" value="PRK06074.1-1"/>
    <property type="match status" value="1"/>
</dbReference>
<dbReference type="PANTHER" id="PTHR10884:SF14">
    <property type="entry name" value="NADH DEHYDROGENASE [UBIQUINONE] IRON-SULFUR PROTEIN 3, MITOCHONDRIAL"/>
    <property type="match status" value="1"/>
</dbReference>
<dbReference type="PANTHER" id="PTHR10884">
    <property type="entry name" value="NADH DEHYDROGENASE UBIQUINONE IRON-SULFUR PROTEIN 3"/>
    <property type="match status" value="1"/>
</dbReference>
<dbReference type="Pfam" id="PF00329">
    <property type="entry name" value="Complex1_30kDa"/>
    <property type="match status" value="1"/>
</dbReference>
<dbReference type="SUPFAM" id="SSF143243">
    <property type="entry name" value="Nqo5-like"/>
    <property type="match status" value="1"/>
</dbReference>
<dbReference type="PROSITE" id="PS00542">
    <property type="entry name" value="COMPLEX1_30K"/>
    <property type="match status" value="1"/>
</dbReference>
<feature type="chain" id="PRO_0000358085" description="NADH-quinone oxidoreductase subunit C">
    <location>
        <begin position="1"/>
        <end position="227"/>
    </location>
</feature>
<accession>A9KBK6</accession>
<name>NUOC_COXBN</name>
<comment type="function">
    <text evidence="1">NDH-1 shuttles electrons from NADH, via FMN and iron-sulfur (Fe-S) centers, to quinones in the respiratory chain. The immediate electron acceptor for the enzyme in this species is believed to be ubiquinone. Couples the redox reaction to proton translocation (for every two electrons transferred, four hydrogen ions are translocated across the cytoplasmic membrane), and thus conserves the redox energy in a proton gradient.</text>
</comment>
<comment type="catalytic activity">
    <reaction evidence="1">
        <text>a quinone + NADH + 5 H(+)(in) = a quinol + NAD(+) + 4 H(+)(out)</text>
        <dbReference type="Rhea" id="RHEA:57888"/>
        <dbReference type="ChEBI" id="CHEBI:15378"/>
        <dbReference type="ChEBI" id="CHEBI:24646"/>
        <dbReference type="ChEBI" id="CHEBI:57540"/>
        <dbReference type="ChEBI" id="CHEBI:57945"/>
        <dbReference type="ChEBI" id="CHEBI:132124"/>
    </reaction>
</comment>
<comment type="subunit">
    <text evidence="1">NDH-1 is composed of 14 different subunits. Subunits NuoB, C, D, E, F, and G constitute the peripheral sector of the complex.</text>
</comment>
<comment type="subcellular location">
    <subcellularLocation>
        <location evidence="1">Cell inner membrane</location>
        <topology evidence="1">Peripheral membrane protein</topology>
        <orientation evidence="1">Cytoplasmic side</orientation>
    </subcellularLocation>
</comment>
<comment type="similarity">
    <text evidence="1">Belongs to the complex I 30 kDa subunit family.</text>
</comment>
<reference key="1">
    <citation type="journal article" date="2009" name="Infect. Immun.">
        <title>Comparative genomics reveal extensive transposon-mediated genomic plasticity and diversity among potential effector proteins within the genus Coxiella.</title>
        <authorList>
            <person name="Beare P.A."/>
            <person name="Unsworth N."/>
            <person name="Andoh M."/>
            <person name="Voth D.E."/>
            <person name="Omsland A."/>
            <person name="Gilk S.D."/>
            <person name="Williams K.P."/>
            <person name="Sobral B.W."/>
            <person name="Kupko J.J. III"/>
            <person name="Porcella S.F."/>
            <person name="Samuel J.E."/>
            <person name="Heinzen R.A."/>
        </authorList>
    </citation>
    <scope>NUCLEOTIDE SEQUENCE [LARGE SCALE GENOMIC DNA]</scope>
    <source>
        <strain>Dugway 5J108-111</strain>
    </source>
</reference>
<proteinExistence type="inferred from homology"/>
<gene>
    <name evidence="1" type="primary">nuoC</name>
    <name type="ordered locus">CBUD_0547</name>
</gene>
<evidence type="ECO:0000255" key="1">
    <source>
        <dbReference type="HAMAP-Rule" id="MF_01357"/>
    </source>
</evidence>